<reference key="1">
    <citation type="journal article" date="2010" name="Genome Biol. Evol.">
        <title>Continuing evolution of Burkholderia mallei through genome reduction and large-scale rearrangements.</title>
        <authorList>
            <person name="Losada L."/>
            <person name="Ronning C.M."/>
            <person name="DeShazer D."/>
            <person name="Woods D."/>
            <person name="Fedorova N."/>
            <person name="Kim H.S."/>
            <person name="Shabalina S.A."/>
            <person name="Pearson T.R."/>
            <person name="Brinkac L."/>
            <person name="Tan P."/>
            <person name="Nandi T."/>
            <person name="Crabtree J."/>
            <person name="Badger J."/>
            <person name="Beckstrom-Sternberg S."/>
            <person name="Saqib M."/>
            <person name="Schutzer S.E."/>
            <person name="Keim P."/>
            <person name="Nierman W.C."/>
        </authorList>
    </citation>
    <scope>NUCLEOTIDE SEQUENCE [LARGE SCALE GENOMIC DNA]</scope>
    <source>
        <strain>1710b</strain>
    </source>
</reference>
<reference key="2">
    <citation type="submission" date="2008-03" db="PDB data bank">
        <title>Methionine-R-sulfoxide reductase from Burkholderia pseudomallei.</title>
        <authorList>
            <consortium name="Seattle structural genomics center for infectious disease (SSGCID)"/>
        </authorList>
    </citation>
    <scope>X-RAY CRYSTALLOGRAPHY (2.1 ANGSTROMS) IN COMPLEX WITH ZINC IONS</scope>
</reference>
<feature type="chain" id="PRO_0000338617" description="Peptide methionine sulfoxide reductase MsrB">
    <location>
        <begin position="1"/>
        <end position="143"/>
    </location>
</feature>
<feature type="domain" description="MsrB" evidence="2">
    <location>
        <begin position="16"/>
        <end position="139"/>
    </location>
</feature>
<feature type="active site" description="Nucleophile" evidence="2">
    <location>
        <position position="128"/>
    </location>
</feature>
<feature type="binding site" evidence="2">
    <location>
        <position position="55"/>
    </location>
    <ligand>
        <name>Zn(2+)</name>
        <dbReference type="ChEBI" id="CHEBI:29105"/>
    </ligand>
</feature>
<feature type="binding site" evidence="2">
    <location>
        <position position="58"/>
    </location>
    <ligand>
        <name>Zn(2+)</name>
        <dbReference type="ChEBI" id="CHEBI:29105"/>
    </ligand>
</feature>
<feature type="binding site" evidence="2">
    <location>
        <position position="104"/>
    </location>
    <ligand>
        <name>Zn(2+)</name>
        <dbReference type="ChEBI" id="CHEBI:29105"/>
    </ligand>
</feature>
<feature type="binding site" evidence="2">
    <location>
        <position position="107"/>
    </location>
    <ligand>
        <name>Zn(2+)</name>
        <dbReference type="ChEBI" id="CHEBI:29105"/>
    </ligand>
</feature>
<feature type="helix" evidence="3">
    <location>
        <begin position="16"/>
        <end position="22"/>
    </location>
</feature>
<feature type="helix" evidence="3">
    <location>
        <begin position="25"/>
        <end position="33"/>
    </location>
</feature>
<feature type="turn" evidence="3">
    <location>
        <begin position="43"/>
        <end position="46"/>
    </location>
</feature>
<feature type="strand" evidence="3">
    <location>
        <begin position="50"/>
        <end position="55"/>
    </location>
</feature>
<feature type="turn" evidence="3">
    <location>
        <begin position="56"/>
        <end position="58"/>
    </location>
</feature>
<feature type="strand" evidence="3">
    <location>
        <begin position="61"/>
        <end position="64"/>
    </location>
</feature>
<feature type="helix" evidence="3">
    <location>
        <begin position="65"/>
        <end position="67"/>
    </location>
</feature>
<feature type="strand" evidence="3">
    <location>
        <begin position="73"/>
        <end position="75"/>
    </location>
</feature>
<feature type="strand" evidence="3">
    <location>
        <begin position="77"/>
        <end position="80"/>
    </location>
</feature>
<feature type="strand" evidence="3">
    <location>
        <begin position="86"/>
        <end position="92"/>
    </location>
</feature>
<feature type="helix" evidence="3">
    <location>
        <begin position="94"/>
        <end position="96"/>
    </location>
</feature>
<feature type="strand" evidence="3">
    <location>
        <begin position="99"/>
        <end position="104"/>
    </location>
</feature>
<feature type="turn" evidence="3">
    <location>
        <begin position="105"/>
        <end position="107"/>
    </location>
</feature>
<feature type="strand" evidence="3">
    <location>
        <begin position="110"/>
        <end position="116"/>
    </location>
</feature>
<feature type="turn" evidence="3">
    <location>
        <begin position="120"/>
        <end position="123"/>
    </location>
</feature>
<feature type="strand" evidence="3">
    <location>
        <begin position="126"/>
        <end position="129"/>
    </location>
</feature>
<feature type="helix" evidence="3">
    <location>
        <begin position="131"/>
        <end position="133"/>
    </location>
</feature>
<feature type="strand" evidence="3">
    <location>
        <begin position="134"/>
        <end position="138"/>
    </location>
</feature>
<organism>
    <name type="scientific">Burkholderia pseudomallei (strain 1710b)</name>
    <dbReference type="NCBI Taxonomy" id="320372"/>
    <lineage>
        <taxon>Bacteria</taxon>
        <taxon>Pseudomonadati</taxon>
        <taxon>Pseudomonadota</taxon>
        <taxon>Betaproteobacteria</taxon>
        <taxon>Burkholderiales</taxon>
        <taxon>Burkholderiaceae</taxon>
        <taxon>Burkholderia</taxon>
        <taxon>pseudomallei group</taxon>
    </lineage>
</organism>
<name>MSRB_BURP1</name>
<comment type="catalytic activity">
    <reaction evidence="1">
        <text>L-methionyl-[protein] + [thioredoxin]-disulfide + H2O = L-methionyl-(R)-S-oxide-[protein] + [thioredoxin]-dithiol</text>
        <dbReference type="Rhea" id="RHEA:24164"/>
        <dbReference type="Rhea" id="RHEA-COMP:10698"/>
        <dbReference type="Rhea" id="RHEA-COMP:10700"/>
        <dbReference type="Rhea" id="RHEA-COMP:12313"/>
        <dbReference type="Rhea" id="RHEA-COMP:12314"/>
        <dbReference type="ChEBI" id="CHEBI:15377"/>
        <dbReference type="ChEBI" id="CHEBI:16044"/>
        <dbReference type="ChEBI" id="CHEBI:29950"/>
        <dbReference type="ChEBI" id="CHEBI:45764"/>
        <dbReference type="ChEBI" id="CHEBI:50058"/>
        <dbReference type="EC" id="1.8.4.12"/>
    </reaction>
</comment>
<comment type="cofactor">
    <cofactor>
        <name>Zn(2+)</name>
        <dbReference type="ChEBI" id="CHEBI:29105"/>
    </cofactor>
    <text>Binds 1 zinc ion per subunit. The zinc ion is important for the structural integrity of the protein.</text>
</comment>
<comment type="similarity">
    <text evidence="1">Belongs to the MsrB Met sulfoxide reductase family.</text>
</comment>
<proteinExistence type="evidence at protein level"/>
<accession>Q3JRF0</accession>
<keyword id="KW-0002">3D-structure</keyword>
<keyword id="KW-0479">Metal-binding</keyword>
<keyword id="KW-0560">Oxidoreductase</keyword>
<keyword id="KW-0862">Zinc</keyword>
<sequence length="143" mass="16187">MSGDRDDPRYPYPKDDAELRRRLTPMQYEVTQHAATEPPFTGEYTDTEDAGIYHCVVCGTALFESGAKYHSGCGWPSYFKPIDGEVIDEKMDYTHGMTRVEVRCNQCGAHLGHVFEDGPRDKTGLRYCINSAALNFEAKPERK</sequence>
<evidence type="ECO:0000255" key="1">
    <source>
        <dbReference type="HAMAP-Rule" id="MF_01400"/>
    </source>
</evidence>
<evidence type="ECO:0000255" key="2">
    <source>
        <dbReference type="PROSITE-ProRule" id="PRU01126"/>
    </source>
</evidence>
<evidence type="ECO:0007829" key="3">
    <source>
        <dbReference type="PDB" id="3CXK"/>
    </source>
</evidence>
<protein>
    <recommendedName>
        <fullName evidence="1">Peptide methionine sulfoxide reductase MsrB</fullName>
        <ecNumber evidence="1">1.8.4.12</ecNumber>
    </recommendedName>
    <alternativeName>
        <fullName evidence="1">Peptide-methionine (R)-S-oxide reductase</fullName>
    </alternativeName>
</protein>
<gene>
    <name evidence="1" type="primary">msrB</name>
    <name type="ordered locus">BURPS1710b_2458</name>
</gene>
<dbReference type="EC" id="1.8.4.12" evidence="1"/>
<dbReference type="EMBL" id="CP000124">
    <property type="protein sequence ID" value="ABA49928.1"/>
    <property type="molecule type" value="Genomic_DNA"/>
</dbReference>
<dbReference type="RefSeq" id="WP_004527204.1">
    <property type="nucleotide sequence ID" value="NC_007434.1"/>
</dbReference>
<dbReference type="PDB" id="3CEZ">
    <property type="method" value="X-ray"/>
    <property type="resolution" value="2.10 A"/>
    <property type="chains" value="A/B=1-143"/>
</dbReference>
<dbReference type="PDB" id="3CXK">
    <property type="method" value="X-ray"/>
    <property type="resolution" value="1.70 A"/>
    <property type="chains" value="A/B=1-143"/>
</dbReference>
<dbReference type="PDBsum" id="3CEZ"/>
<dbReference type="PDBsum" id="3CXK"/>
<dbReference type="SMR" id="Q3JRF0"/>
<dbReference type="EnsemblBacteria" id="ABA49928">
    <property type="protein sequence ID" value="ABA49928"/>
    <property type="gene ID" value="BURPS1710b_2458"/>
</dbReference>
<dbReference type="GeneID" id="93060573"/>
<dbReference type="KEGG" id="bpm:BURPS1710b_2458"/>
<dbReference type="HOGENOM" id="CLU_031040_8_5_4"/>
<dbReference type="EvolutionaryTrace" id="Q3JRF0"/>
<dbReference type="Proteomes" id="UP000002700">
    <property type="component" value="Chromosome I"/>
</dbReference>
<dbReference type="GO" id="GO:0005737">
    <property type="term" value="C:cytoplasm"/>
    <property type="evidence" value="ECO:0007669"/>
    <property type="project" value="TreeGrafter"/>
</dbReference>
<dbReference type="GO" id="GO:0033743">
    <property type="term" value="F:peptide-methionine (R)-S-oxide reductase activity"/>
    <property type="evidence" value="ECO:0007669"/>
    <property type="project" value="UniProtKB-UniRule"/>
</dbReference>
<dbReference type="GO" id="GO:0008270">
    <property type="term" value="F:zinc ion binding"/>
    <property type="evidence" value="ECO:0007669"/>
    <property type="project" value="UniProtKB-UniRule"/>
</dbReference>
<dbReference type="GO" id="GO:0030091">
    <property type="term" value="P:protein repair"/>
    <property type="evidence" value="ECO:0007669"/>
    <property type="project" value="InterPro"/>
</dbReference>
<dbReference type="GO" id="GO:0006979">
    <property type="term" value="P:response to oxidative stress"/>
    <property type="evidence" value="ECO:0007669"/>
    <property type="project" value="InterPro"/>
</dbReference>
<dbReference type="FunFam" id="2.170.150.20:FF:000003">
    <property type="entry name" value="Peptide methionine sulfoxide reductase MsrB"/>
    <property type="match status" value="1"/>
</dbReference>
<dbReference type="Gene3D" id="2.170.150.20">
    <property type="entry name" value="Peptide methionine sulfoxide reductase"/>
    <property type="match status" value="1"/>
</dbReference>
<dbReference type="HAMAP" id="MF_01400">
    <property type="entry name" value="MsrB"/>
    <property type="match status" value="1"/>
</dbReference>
<dbReference type="InterPro" id="IPR028427">
    <property type="entry name" value="Met_Sox_Rdtase_MsrB"/>
</dbReference>
<dbReference type="InterPro" id="IPR002579">
    <property type="entry name" value="Met_Sox_Rdtase_MsrB_dom"/>
</dbReference>
<dbReference type="InterPro" id="IPR011057">
    <property type="entry name" value="Mss4-like_sf"/>
</dbReference>
<dbReference type="NCBIfam" id="TIGR00357">
    <property type="entry name" value="peptide-methionine (R)-S-oxide reductase MsrB"/>
    <property type="match status" value="1"/>
</dbReference>
<dbReference type="PANTHER" id="PTHR10173">
    <property type="entry name" value="METHIONINE SULFOXIDE REDUCTASE"/>
    <property type="match status" value="1"/>
</dbReference>
<dbReference type="PANTHER" id="PTHR10173:SF52">
    <property type="entry name" value="METHIONINE-R-SULFOXIDE REDUCTASE B1"/>
    <property type="match status" value="1"/>
</dbReference>
<dbReference type="Pfam" id="PF01641">
    <property type="entry name" value="SelR"/>
    <property type="match status" value="1"/>
</dbReference>
<dbReference type="SUPFAM" id="SSF51316">
    <property type="entry name" value="Mss4-like"/>
    <property type="match status" value="1"/>
</dbReference>
<dbReference type="PROSITE" id="PS51790">
    <property type="entry name" value="MSRB"/>
    <property type="match status" value="1"/>
</dbReference>